<evidence type="ECO:0000250" key="1"/>
<evidence type="ECO:0000269" key="2">
    <source>
    </source>
</evidence>
<evidence type="ECO:0000305" key="3"/>
<comment type="similarity">
    <text evidence="3">Belongs to the transferrin family.</text>
</comment>
<dbReference type="PIR" id="A03258">
    <property type="entry name" value="IZWS"/>
</dbReference>
<dbReference type="SMR" id="P02785"/>
<dbReference type="Gene3D" id="3.10.360.10">
    <property type="entry name" value="Antimicrobial Peptide, Beta-defensin 2, Chain A"/>
    <property type="match status" value="1"/>
</dbReference>
<dbReference type="InterPro" id="IPR012573">
    <property type="entry name" value="Meleagrin/Cygnin"/>
</dbReference>
<dbReference type="Pfam" id="PF08189">
    <property type="entry name" value="Meleagrin"/>
    <property type="match status" value="1"/>
</dbReference>
<feature type="peptide" id="PRO_0000045042" description="Cygnin">
    <location>
        <begin position="1"/>
        <end position="39"/>
    </location>
</feature>
<feature type="modified residue" description="Pyrrolidone carboxylic acid" evidence="2">
    <location>
        <position position="1"/>
    </location>
</feature>
<feature type="disulfide bond" description="Or C-6 with C-32" evidence="1">
    <location>
        <begin position="6"/>
        <end position="33"/>
    </location>
</feature>
<feature type="disulfide bond" evidence="1">
    <location>
        <begin position="12"/>
        <end position="28"/>
    </location>
</feature>
<feature type="disulfide bond" description="Or C-16 with C-33" evidence="1">
    <location>
        <begin position="16"/>
        <end position="32"/>
    </location>
</feature>
<reference key="1">
    <citation type="journal article" date="1983" name="Int. J. Pept. Protein Res.">
        <title>Isolation and complete amino acid sequence of a basic low molecular weight protein from black swan egg white.</title>
        <authorList>
            <person name="Simpson R.J."/>
            <person name="Morgan F.J."/>
        </authorList>
    </citation>
    <scope>PROTEIN SEQUENCE</scope>
    <scope>PYROGLUTAMATE FORMATION AT GLN-1</scope>
    <source>
        <tissue>Egg white</tissue>
    </source>
</reference>
<keyword id="KW-0903">Direct protein sequencing</keyword>
<keyword id="KW-1015">Disulfide bond</keyword>
<keyword id="KW-0873">Pyrrolidone carboxylic acid</keyword>
<organism>
    <name type="scientific">Cygnus atratus</name>
    <name type="common">Black swan</name>
    <name type="synonym">Anas atrata</name>
    <dbReference type="NCBI Taxonomy" id="8868"/>
    <lineage>
        <taxon>Eukaryota</taxon>
        <taxon>Metazoa</taxon>
        <taxon>Chordata</taxon>
        <taxon>Craniata</taxon>
        <taxon>Vertebrata</taxon>
        <taxon>Euteleostomi</taxon>
        <taxon>Archelosauria</taxon>
        <taxon>Archosauria</taxon>
        <taxon>Dinosauria</taxon>
        <taxon>Saurischia</taxon>
        <taxon>Theropoda</taxon>
        <taxon>Coelurosauria</taxon>
        <taxon>Aves</taxon>
        <taxon>Neognathae</taxon>
        <taxon>Galloanserae</taxon>
        <taxon>Anseriformes</taxon>
        <taxon>Anatidae</taxon>
        <taxon>Anserinae</taxon>
        <taxon>Cygnus</taxon>
    </lineage>
</organism>
<name>CYGN_CYGAT</name>
<proteinExistence type="evidence at protein level"/>
<protein>
    <recommendedName>
        <fullName>Cygnin</fullName>
    </recommendedName>
</protein>
<accession>P02785</accession>
<sequence length="39" mass="4452">QVRKYCPKVGYCSSKCSKADVWSLSSDCKFYCCLPPGWK</sequence>